<gene>
    <name evidence="1" type="primary">sepF</name>
    <name type="ordered locus">alr0487</name>
</gene>
<sequence length="198" mass="21907">MNNIFSKLRDFVGLNEQVEYEYYEEEADTDNYQNLYQQENPQPAPAEAAPNNRRWREPMTTMGDDVAAGTKSAMGNVIGMPGAINGISEVLVLEPRTFEEMPQAIQALRERKSVVLNLTIMDPDQAQRAVDFVAGGTYALDGHQERIGESIFLFTPSCVQVSTQGGVIHEVPQPPARPARPASTNPPAWGNETNRMAQ</sequence>
<proteinExistence type="inferred from homology"/>
<keyword id="KW-0131">Cell cycle</keyword>
<keyword id="KW-0132">Cell division</keyword>
<keyword id="KW-0963">Cytoplasm</keyword>
<keyword id="KW-1185">Reference proteome</keyword>
<keyword id="KW-0717">Septation</keyword>
<feature type="chain" id="PRO_0000333970" description="Cell division protein SepF">
    <location>
        <begin position="1"/>
        <end position="198"/>
    </location>
</feature>
<feature type="region of interest" description="Disordered" evidence="2">
    <location>
        <begin position="170"/>
        <end position="198"/>
    </location>
</feature>
<feature type="compositionally biased region" description="Low complexity" evidence="2">
    <location>
        <begin position="179"/>
        <end position="188"/>
    </location>
</feature>
<protein>
    <recommendedName>
        <fullName evidence="1">Cell division protein SepF</fullName>
    </recommendedName>
</protein>
<reference key="1">
    <citation type="journal article" date="2001" name="DNA Res.">
        <title>Complete genomic sequence of the filamentous nitrogen-fixing cyanobacterium Anabaena sp. strain PCC 7120.</title>
        <authorList>
            <person name="Kaneko T."/>
            <person name="Nakamura Y."/>
            <person name="Wolk C.P."/>
            <person name="Kuritz T."/>
            <person name="Sasamoto S."/>
            <person name="Watanabe A."/>
            <person name="Iriguchi M."/>
            <person name="Ishikawa A."/>
            <person name="Kawashima K."/>
            <person name="Kimura T."/>
            <person name="Kishida Y."/>
            <person name="Kohara M."/>
            <person name="Matsumoto M."/>
            <person name="Matsuno A."/>
            <person name="Muraki A."/>
            <person name="Nakazaki N."/>
            <person name="Shimpo S."/>
            <person name="Sugimoto M."/>
            <person name="Takazawa M."/>
            <person name="Yamada M."/>
            <person name="Yasuda M."/>
            <person name="Tabata S."/>
        </authorList>
    </citation>
    <scope>NUCLEOTIDE SEQUENCE [LARGE SCALE GENOMIC DNA]</scope>
    <source>
        <strain>PCC 7120 / SAG 25.82 / UTEX 2576</strain>
    </source>
</reference>
<dbReference type="EMBL" id="BA000019">
    <property type="protein sequence ID" value="BAB72445.1"/>
    <property type="molecule type" value="Genomic_DNA"/>
</dbReference>
<dbReference type="PIR" id="AF1867">
    <property type="entry name" value="AF1867"/>
</dbReference>
<dbReference type="RefSeq" id="WP_010994663.1">
    <property type="nucleotide sequence ID" value="NZ_RSCN01000024.1"/>
</dbReference>
<dbReference type="SMR" id="Q8YZH3"/>
<dbReference type="STRING" id="103690.gene:10492496"/>
<dbReference type="KEGG" id="ana:alr0487"/>
<dbReference type="eggNOG" id="COG1799">
    <property type="taxonomic scope" value="Bacteria"/>
</dbReference>
<dbReference type="OrthoDB" id="9815206at2"/>
<dbReference type="Proteomes" id="UP000002483">
    <property type="component" value="Chromosome"/>
</dbReference>
<dbReference type="GO" id="GO:0005737">
    <property type="term" value="C:cytoplasm"/>
    <property type="evidence" value="ECO:0007669"/>
    <property type="project" value="UniProtKB-SubCell"/>
</dbReference>
<dbReference type="GO" id="GO:0000917">
    <property type="term" value="P:division septum assembly"/>
    <property type="evidence" value="ECO:0007669"/>
    <property type="project" value="UniProtKB-KW"/>
</dbReference>
<dbReference type="GO" id="GO:0043093">
    <property type="term" value="P:FtsZ-dependent cytokinesis"/>
    <property type="evidence" value="ECO:0007669"/>
    <property type="project" value="UniProtKB-UniRule"/>
</dbReference>
<dbReference type="Gene3D" id="3.30.110.150">
    <property type="entry name" value="SepF-like protein"/>
    <property type="match status" value="1"/>
</dbReference>
<dbReference type="HAMAP" id="MF_01197">
    <property type="entry name" value="SepF"/>
    <property type="match status" value="1"/>
</dbReference>
<dbReference type="InterPro" id="IPR023052">
    <property type="entry name" value="Cell_div_SepF"/>
</dbReference>
<dbReference type="InterPro" id="IPR007561">
    <property type="entry name" value="Cell_div_SepF/SepF-rel"/>
</dbReference>
<dbReference type="InterPro" id="IPR038594">
    <property type="entry name" value="SepF-like_sf"/>
</dbReference>
<dbReference type="PANTHER" id="PTHR35798">
    <property type="entry name" value="CELL DIVISION PROTEIN SEPF"/>
    <property type="match status" value="1"/>
</dbReference>
<dbReference type="PANTHER" id="PTHR35798:SF1">
    <property type="entry name" value="CELL DIVISION PROTEIN SEPF"/>
    <property type="match status" value="1"/>
</dbReference>
<dbReference type="Pfam" id="PF04472">
    <property type="entry name" value="SepF"/>
    <property type="match status" value="1"/>
</dbReference>
<evidence type="ECO:0000255" key="1">
    <source>
        <dbReference type="HAMAP-Rule" id="MF_01197"/>
    </source>
</evidence>
<evidence type="ECO:0000256" key="2">
    <source>
        <dbReference type="SAM" id="MobiDB-lite"/>
    </source>
</evidence>
<name>SEPF_NOSS1</name>
<comment type="function">
    <text evidence="1">Cell division protein that is part of the divisome complex and is recruited early to the Z-ring. Probably stimulates Z-ring formation, perhaps through the cross-linking of FtsZ protofilaments. Its function overlaps with FtsA.</text>
</comment>
<comment type="subunit">
    <text evidence="1">Homodimer. Interacts with FtsZ.</text>
</comment>
<comment type="subcellular location">
    <subcellularLocation>
        <location evidence="1">Cytoplasm</location>
    </subcellularLocation>
    <text evidence="1">Localizes to the division site, in a FtsZ-dependent manner.</text>
</comment>
<comment type="similarity">
    <text evidence="1">Belongs to the SepF family.</text>
</comment>
<organism>
    <name type="scientific">Nostoc sp. (strain PCC 7120 / SAG 25.82 / UTEX 2576)</name>
    <dbReference type="NCBI Taxonomy" id="103690"/>
    <lineage>
        <taxon>Bacteria</taxon>
        <taxon>Bacillati</taxon>
        <taxon>Cyanobacteriota</taxon>
        <taxon>Cyanophyceae</taxon>
        <taxon>Nostocales</taxon>
        <taxon>Nostocaceae</taxon>
        <taxon>Nostoc</taxon>
    </lineage>
</organism>
<accession>Q8YZH3</accession>